<dbReference type="EMBL" id="EU159294">
    <property type="protein sequence ID" value="ABX76767.1"/>
    <property type="molecule type" value="mRNA"/>
</dbReference>
<dbReference type="SMR" id="D9U2A2"/>
<dbReference type="GO" id="GO:0005576">
    <property type="term" value="C:extracellular region"/>
    <property type="evidence" value="ECO:0007669"/>
    <property type="project" value="UniProtKB-SubCell"/>
</dbReference>
<dbReference type="GO" id="GO:0015459">
    <property type="term" value="F:potassium channel regulator activity"/>
    <property type="evidence" value="ECO:0007669"/>
    <property type="project" value="UniProtKB-KW"/>
</dbReference>
<dbReference type="GO" id="GO:0019871">
    <property type="term" value="F:sodium channel inhibitor activity"/>
    <property type="evidence" value="ECO:0007669"/>
    <property type="project" value="InterPro"/>
</dbReference>
<dbReference type="GO" id="GO:0090729">
    <property type="term" value="F:toxin activity"/>
    <property type="evidence" value="ECO:0007669"/>
    <property type="project" value="UniProtKB-KW"/>
</dbReference>
<dbReference type="Gene3D" id="3.30.30.10">
    <property type="entry name" value="Knottin, scorpion toxin-like"/>
    <property type="match status" value="1"/>
</dbReference>
<dbReference type="InterPro" id="IPR044062">
    <property type="entry name" value="LCN-type_CS_alpha_beta_dom"/>
</dbReference>
<dbReference type="InterPro" id="IPR036574">
    <property type="entry name" value="Scorpion_toxin-like_sf"/>
</dbReference>
<dbReference type="InterPro" id="IPR002061">
    <property type="entry name" value="Scorpion_toxinL/defensin"/>
</dbReference>
<dbReference type="Pfam" id="PF00537">
    <property type="entry name" value="Toxin_3"/>
    <property type="match status" value="1"/>
</dbReference>
<dbReference type="SUPFAM" id="SSF57095">
    <property type="entry name" value="Scorpion toxin-like"/>
    <property type="match status" value="1"/>
</dbReference>
<dbReference type="PROSITE" id="PS51863">
    <property type="entry name" value="LCN_CSAB"/>
    <property type="match status" value="1"/>
</dbReference>
<organism>
    <name type="scientific">Lychas mucronatus</name>
    <name type="common">Chinese swimming scorpion</name>
    <dbReference type="NCBI Taxonomy" id="172552"/>
    <lineage>
        <taxon>Eukaryota</taxon>
        <taxon>Metazoa</taxon>
        <taxon>Ecdysozoa</taxon>
        <taxon>Arthropoda</taxon>
        <taxon>Chelicerata</taxon>
        <taxon>Arachnida</taxon>
        <taxon>Scorpiones</taxon>
        <taxon>Buthida</taxon>
        <taxon>Buthoidea</taxon>
        <taxon>Buthidae</taxon>
        <taxon>Lychas</taxon>
    </lineage>
</organism>
<accession>D9U2A2</accession>
<reference key="1">
    <citation type="journal article" date="2010" name="BMC Genomics">
        <title>Comparative venom gland transcriptome analysis of the scorpion Lychas mucronatus reveals intraspecific toxic gene diversity and new venomous components.</title>
        <authorList>
            <person name="Zhao R."/>
            <person name="Ma Y."/>
            <person name="He Y."/>
            <person name="Di Z."/>
            <person name="Wu Y.-L."/>
            <person name="Cao Z.-J."/>
            <person name="Li W.-X."/>
        </authorList>
    </citation>
    <scope>NUCLEOTIDE SEQUENCE [MRNA]</scope>
    <source>
        <strain>Hainan</strain>
        <tissue>Venom gland</tissue>
    </source>
</reference>
<protein>
    <recommendedName>
        <fullName>Lipolysis-activating peptide 1-beta chain</fullName>
        <shortName>LVP1-beta</shortName>
    </recommendedName>
    <alternativeName>
        <fullName>Neurotoxin LmNaTx19</fullName>
    </alternativeName>
</protein>
<evidence type="ECO:0000250" key="1"/>
<evidence type="ECO:0000250" key="2">
    <source>
        <dbReference type="UniProtKB" id="P01493"/>
    </source>
</evidence>
<evidence type="ECO:0000250" key="3">
    <source>
        <dbReference type="UniProtKB" id="P84809"/>
    </source>
</evidence>
<evidence type="ECO:0000250" key="4">
    <source>
        <dbReference type="UniProtKB" id="Q95P90"/>
    </source>
</evidence>
<evidence type="ECO:0000255" key="5"/>
<evidence type="ECO:0000255" key="6">
    <source>
        <dbReference type="PROSITE-ProRule" id="PRU01210"/>
    </source>
</evidence>
<evidence type="ECO:0000305" key="7"/>
<evidence type="ECO:0000305" key="8">
    <source>
    </source>
</evidence>
<feature type="signal peptide" evidence="5">
    <location>
        <begin position="1"/>
        <end position="19"/>
    </location>
</feature>
<feature type="chain" id="PRO_0000403882" description="Lipolysis-activating peptide 1-beta chain">
    <location>
        <begin position="20"/>
        <end position="94"/>
    </location>
</feature>
<feature type="domain" description="LCN-type CS-alpha/beta" evidence="6">
    <location>
        <begin position="20"/>
        <end position="87"/>
    </location>
</feature>
<feature type="disulfide bond" evidence="2">
    <location>
        <begin position="34"/>
        <end position="56"/>
    </location>
</feature>
<feature type="disulfide bond" evidence="2">
    <location>
        <begin position="42"/>
        <end position="66"/>
    </location>
</feature>
<feature type="disulfide bond" evidence="2">
    <location>
        <begin position="46"/>
        <end position="68"/>
    </location>
</feature>
<feature type="disulfide bond" description="Interchain (with C-86 (AC D9U299) or C-87 (AC D9U2A4) in LVP1 chain alpha)" evidence="1">
    <location>
        <position position="86"/>
    </location>
</feature>
<proteinExistence type="inferred from homology"/>
<comment type="function">
    <text evidence="1">The homodimer inhibits HMG-CoA reductase (HMGCR) (32% of inhibition produced by 0.6 uM), a glycoprotein involved in the control of cholesterol biosynthesis. The inhibitory effects of bumarsin are seen at much lower concentrations (0.6 uM) than that for statins such as atorvastatin (5 mM) and simvastatin (10 uM). In addition to inhibition of HMG-CoA reductase, this protein lowers cholesterol levels by inducing steroid hormone synthesis via StAR, and by increasing reverse cholesterol transport mediated by the induction of ABCA1 and APOA1 (By similarity).</text>
</comment>
<comment type="function">
    <text evidence="3">The heterodimer non-edited LVP1 induces lipolysis in rat adipocytes. Induction of lipolysis by LVP1 appears to be mediated through the beta-2 adrenergic receptor pathway (ADRB2) (By similarity).</text>
</comment>
<comment type="function">
    <text evidence="7">The monomer edited version, similar to alpha-toxins, may modulate voltage-gated sodium channels (Nav) and may block voltage-gated potassium channels (Kv).</text>
</comment>
<comment type="subunit">
    <text evidence="4">Homodimer; disulfide-linked or monomer (edited version) or heterodimer of an alpha chain (AC D9U299 or AC D9U2A4) and this beta chain (non-edited version).</text>
</comment>
<comment type="subcellular location">
    <subcellularLocation>
        <location evidence="4">Secreted</location>
    </subcellularLocation>
</comment>
<comment type="tissue specificity">
    <text evidence="8">Expressed by the venom gland.</text>
</comment>
<comment type="domain">
    <text evidence="7">Has the structural arrangement of an alpha-helix connected to antiparallel beta-sheets by disulfide bonds (CS-alpha/beta).</text>
</comment>
<comment type="RNA editing">
    <location>
        <position position="31" evidence="1"/>
    </location>
    <text evidence="1">Partially edited. RNA editing at this position consists of an insertion of three nucleotides, restoring the first Cys residue that forms a disulfide bond with Cys-86, giving a monomeric toxin with 4 disulfide bonds (By similarity).</text>
</comment>
<comment type="similarity">
    <text evidence="7">Belongs to the long (3 C-C) scorpion toxin superfamily.</text>
</comment>
<sequence length="94" mass="10464">MKILAVVLISVIVLNTANGENYYPQKYTNDYYGCQKQTDAFCDKVCKLHLADSGFCDQSWGLAKACKCVNVSYDNSFFFNALESQCPLLNKSAA</sequence>
<keyword id="KW-1015">Disulfide bond</keyword>
<keyword id="KW-1213">G-protein coupled receptor impairing toxin</keyword>
<keyword id="KW-0872">Ion channel impairing toxin</keyword>
<keyword id="KW-0528">Neurotoxin</keyword>
<keyword id="KW-0632">Potassium channel impairing toxin</keyword>
<keyword id="KW-0691">RNA editing</keyword>
<keyword id="KW-0964">Secreted</keyword>
<keyword id="KW-0732">Signal</keyword>
<keyword id="KW-0800">Toxin</keyword>
<keyword id="KW-1220">Voltage-gated potassium channel impairing toxin</keyword>
<keyword id="KW-0738">Voltage-gated sodium channel impairing toxin</keyword>
<name>LV1B1_LYCMC</name>